<sequence length="202" mass="21673">MRPEGVSRGRASSVSISMCPPPPNGARRASLGCAPPLNSRPVCCAPSSVSLSSSSSRRSMPSLGSSRSSSLPSTGSLRSITRDPERLPSRPPSYTAINPECLLERGAERPRAWTASVMTAPPSYSEALCQAPPAYELVPELSYHPTQDPRGVYSSRSDPHQTSRRRQNPICIFIIVVATMLLILGLLLTITLSSLTNGKKEK</sequence>
<evidence type="ECO:0000256" key="1">
    <source>
        <dbReference type="SAM" id="MobiDB-lite"/>
    </source>
</evidence>
<evidence type="ECO:0000305" key="2"/>
<evidence type="ECO:0000312" key="3">
    <source>
        <dbReference type="EMBL" id="AAS45885.1"/>
    </source>
</evidence>
<accession>P84394</accession>
<accession>Q6LEL8</accession>
<reference evidence="2 3" key="1">
    <citation type="submission" date="2003-11" db="EMBL/GenBank/DDBJ databases">
        <authorList>
            <person name="Davis-Poynter N."/>
            <person name="Nugent J."/>
            <person name="Birch-Machin I."/>
            <person name="Allen G.P."/>
        </authorList>
    </citation>
    <scope>NUCLEOTIDE SEQUENCE [LARGE SCALE GENOMIC DNA]</scope>
</reference>
<feature type="chain" id="PRO_0000116155" description="Uncharacterized gene 1 protein">
    <location>
        <begin position="1"/>
        <end position="202"/>
    </location>
</feature>
<feature type="region of interest" description="Disordered" evidence="1">
    <location>
        <begin position="1"/>
        <end position="32"/>
    </location>
</feature>
<feature type="region of interest" description="Disordered" evidence="1">
    <location>
        <begin position="46"/>
        <end position="95"/>
    </location>
</feature>
<feature type="compositionally biased region" description="Low complexity" evidence="1">
    <location>
        <begin position="47"/>
        <end position="79"/>
    </location>
</feature>
<organismHost>
    <name type="scientific">Equus caballus</name>
    <name type="common">Horse</name>
    <dbReference type="NCBI Taxonomy" id="9796"/>
</organismHost>
<name>VG01_EHV1V</name>
<gene>
    <name type="ordered locus">1</name>
</gene>
<proteinExistence type="predicted"/>
<dbReference type="EMBL" id="AY464052">
    <property type="protein sequence ID" value="AAS45885.1"/>
    <property type="molecule type" value="Genomic_DNA"/>
</dbReference>
<dbReference type="SMR" id="P84394"/>
<dbReference type="KEGG" id="vg:1487546"/>
<dbReference type="Proteomes" id="UP000008296">
    <property type="component" value="Segment"/>
</dbReference>
<organism>
    <name type="scientific">Equine herpesvirus 1 (strain V592)</name>
    <name type="common">EHV-1</name>
    <name type="synonym">Equine abortion virus</name>
    <dbReference type="NCBI Taxonomy" id="310273"/>
    <lineage>
        <taxon>Viruses</taxon>
        <taxon>Duplodnaviria</taxon>
        <taxon>Heunggongvirae</taxon>
        <taxon>Peploviricota</taxon>
        <taxon>Herviviricetes</taxon>
        <taxon>Herpesvirales</taxon>
        <taxon>Orthoherpesviridae</taxon>
        <taxon>Alphaherpesvirinae</taxon>
        <taxon>Varicellovirus</taxon>
        <taxon>Varicellovirus equidalpha1</taxon>
        <taxon>Equid alphaherpesvirus 1</taxon>
    </lineage>
</organism>
<protein>
    <recommendedName>
        <fullName>Uncharacterized gene 1 protein</fullName>
    </recommendedName>
</protein>